<protein>
    <recommendedName>
        <fullName>mRNA cap guanine-N(7) methyltransferase</fullName>
        <ecNumber evidence="2">2.1.1.56</ecNumber>
    </recommendedName>
    <alternativeName>
        <fullName>mRNA (guanine-N(7))-methyltransferase</fullName>
    </alternativeName>
    <alternativeName>
        <fullName>mRNA cap methyltransferase</fullName>
    </alternativeName>
</protein>
<organism>
    <name type="scientific">Kluyveromyces lactis (strain ATCC 8585 / CBS 2359 / DSM 70799 / NBRC 1267 / NRRL Y-1140 / WM37)</name>
    <name type="common">Yeast</name>
    <name type="synonym">Candida sphaerica</name>
    <dbReference type="NCBI Taxonomy" id="284590"/>
    <lineage>
        <taxon>Eukaryota</taxon>
        <taxon>Fungi</taxon>
        <taxon>Dikarya</taxon>
        <taxon>Ascomycota</taxon>
        <taxon>Saccharomycotina</taxon>
        <taxon>Saccharomycetes</taxon>
        <taxon>Saccharomycetales</taxon>
        <taxon>Saccharomycetaceae</taxon>
        <taxon>Kluyveromyces</taxon>
    </lineage>
</organism>
<dbReference type="EC" id="2.1.1.56" evidence="2"/>
<dbReference type="EMBL" id="CR382126">
    <property type="protein sequence ID" value="CAG98267.1"/>
    <property type="molecule type" value="Genomic_DNA"/>
</dbReference>
<dbReference type="RefSeq" id="XP_455559.1">
    <property type="nucleotide sequence ID" value="XM_455559.1"/>
</dbReference>
<dbReference type="SMR" id="Q6CKI0"/>
<dbReference type="FunCoup" id="Q6CKI0">
    <property type="interactions" value="1083"/>
</dbReference>
<dbReference type="STRING" id="284590.Q6CKI0"/>
<dbReference type="PaxDb" id="284590-Q6CKI0"/>
<dbReference type="KEGG" id="kla:KLLA0_F10527g"/>
<dbReference type="eggNOG" id="KOG1975">
    <property type="taxonomic scope" value="Eukaryota"/>
</dbReference>
<dbReference type="HOGENOM" id="CLU_020346_2_0_1"/>
<dbReference type="InParanoid" id="Q6CKI0"/>
<dbReference type="OMA" id="LITGDCF"/>
<dbReference type="Proteomes" id="UP000000598">
    <property type="component" value="Chromosome F"/>
</dbReference>
<dbReference type="GO" id="GO:0005634">
    <property type="term" value="C:nucleus"/>
    <property type="evidence" value="ECO:0007669"/>
    <property type="project" value="UniProtKB-SubCell"/>
</dbReference>
<dbReference type="GO" id="GO:0004482">
    <property type="term" value="F:mRNA 5'-cap (guanine-N7-)-methyltransferase activity"/>
    <property type="evidence" value="ECO:0007669"/>
    <property type="project" value="UniProtKB-EC"/>
</dbReference>
<dbReference type="GO" id="GO:0003723">
    <property type="term" value="F:RNA binding"/>
    <property type="evidence" value="ECO:0007669"/>
    <property type="project" value="UniProtKB-KW"/>
</dbReference>
<dbReference type="CDD" id="cd02440">
    <property type="entry name" value="AdoMet_MTases"/>
    <property type="match status" value="1"/>
</dbReference>
<dbReference type="FunFam" id="3.40.50.150:FF:000280">
    <property type="entry name" value="mRNA cap guanine-N7 methyltransferase"/>
    <property type="match status" value="1"/>
</dbReference>
<dbReference type="Gene3D" id="3.40.50.150">
    <property type="entry name" value="Vaccinia Virus protein VP39"/>
    <property type="match status" value="1"/>
</dbReference>
<dbReference type="InterPro" id="IPR004971">
    <property type="entry name" value="mRNA_G-N7_MeTrfase_dom"/>
</dbReference>
<dbReference type="InterPro" id="IPR016899">
    <property type="entry name" value="mRNA_G-N7_MeTrfase_euk"/>
</dbReference>
<dbReference type="InterPro" id="IPR039753">
    <property type="entry name" value="RG7MT1"/>
</dbReference>
<dbReference type="InterPro" id="IPR029063">
    <property type="entry name" value="SAM-dependent_MTases_sf"/>
</dbReference>
<dbReference type="PANTHER" id="PTHR12189:SF2">
    <property type="entry name" value="MRNA CAP GUANINE-N7 METHYLTRANSFERASE"/>
    <property type="match status" value="1"/>
</dbReference>
<dbReference type="PANTHER" id="PTHR12189">
    <property type="entry name" value="MRNA GUANINE-7- METHYLTRANSFERASE"/>
    <property type="match status" value="1"/>
</dbReference>
<dbReference type="Pfam" id="PF03291">
    <property type="entry name" value="mRNA_G-N7_MeTrfase"/>
    <property type="match status" value="1"/>
</dbReference>
<dbReference type="PIRSF" id="PIRSF028762">
    <property type="entry name" value="ABD1"/>
    <property type="match status" value="1"/>
</dbReference>
<dbReference type="SUPFAM" id="SSF53335">
    <property type="entry name" value="S-adenosyl-L-methionine-dependent methyltransferases"/>
    <property type="match status" value="1"/>
</dbReference>
<dbReference type="PROSITE" id="PS51562">
    <property type="entry name" value="RNA_CAP0_MT"/>
    <property type="match status" value="1"/>
</dbReference>
<keyword id="KW-0489">Methyltransferase</keyword>
<keyword id="KW-0506">mRNA capping</keyword>
<keyword id="KW-0507">mRNA processing</keyword>
<keyword id="KW-0539">Nucleus</keyword>
<keyword id="KW-1185">Reference proteome</keyword>
<keyword id="KW-0694">RNA-binding</keyword>
<keyword id="KW-0949">S-adenosyl-L-methionine</keyword>
<keyword id="KW-0808">Transferase</keyword>
<name>MCES_KLULA</name>
<proteinExistence type="inferred from homology"/>
<evidence type="ECO:0000250" key="1"/>
<evidence type="ECO:0000250" key="2">
    <source>
        <dbReference type="UniProtKB" id="O43148"/>
    </source>
</evidence>
<evidence type="ECO:0000255" key="3">
    <source>
        <dbReference type="PROSITE-ProRule" id="PRU00895"/>
    </source>
</evidence>
<comment type="function">
    <text evidence="1">Responsible for methylating the 5'-cap structure of mRNAs.</text>
</comment>
<comment type="catalytic activity">
    <reaction evidence="2 3">
        <text>a 5'-end (5'-triphosphoguanosine)-ribonucleoside in mRNA + S-adenosyl-L-methionine = a 5'-end (N(7)-methyl 5'-triphosphoguanosine)-ribonucleoside in mRNA + S-adenosyl-L-homocysteine</text>
        <dbReference type="Rhea" id="RHEA:67008"/>
        <dbReference type="Rhea" id="RHEA-COMP:17166"/>
        <dbReference type="Rhea" id="RHEA-COMP:17167"/>
        <dbReference type="ChEBI" id="CHEBI:57856"/>
        <dbReference type="ChEBI" id="CHEBI:59789"/>
        <dbReference type="ChEBI" id="CHEBI:156461"/>
        <dbReference type="ChEBI" id="CHEBI:167617"/>
        <dbReference type="EC" id="2.1.1.56"/>
    </reaction>
</comment>
<comment type="subcellular location">
    <subcellularLocation>
        <location evidence="1">Nucleus</location>
    </subcellularLocation>
</comment>
<comment type="similarity">
    <text evidence="3">Belongs to the class I-like SAM-binding methyltransferase superfamily. mRNA cap 0 methyltransferase family.</text>
</comment>
<feature type="chain" id="PRO_0000303909" description="mRNA cap guanine-N(7) methyltransferase">
    <location>
        <begin position="1"/>
        <end position="426"/>
    </location>
</feature>
<feature type="domain" description="mRNA cap 0 methyltransferase" evidence="3">
    <location>
        <begin position="138"/>
        <end position="421"/>
    </location>
</feature>
<feature type="binding site" evidence="3">
    <location>
        <begin position="147"/>
        <end position="148"/>
    </location>
    <ligand>
        <name>mRNA</name>
        <dbReference type="ChEBI" id="CHEBI:33699"/>
    </ligand>
    <ligandPart>
        <name>mRNA cap</name>
    </ligandPart>
</feature>
<feature type="binding site" evidence="3">
    <location>
        <position position="151"/>
    </location>
    <ligand>
        <name>S-adenosyl-L-methionine</name>
        <dbReference type="ChEBI" id="CHEBI:59789"/>
    </ligand>
</feature>
<feature type="binding site" evidence="3">
    <location>
        <position position="169"/>
    </location>
    <ligand>
        <name>S-adenosyl-L-methionine</name>
        <dbReference type="ChEBI" id="CHEBI:59789"/>
    </ligand>
</feature>
<feature type="binding site" evidence="3">
    <location>
        <position position="191"/>
    </location>
    <ligand>
        <name>S-adenosyl-L-methionine</name>
        <dbReference type="ChEBI" id="CHEBI:59789"/>
    </ligand>
</feature>
<feature type="binding site" evidence="2">
    <location>
        <position position="220"/>
    </location>
    <ligand>
        <name>S-adenosyl-L-methionine</name>
        <dbReference type="ChEBI" id="CHEBI:59789"/>
    </ligand>
</feature>
<feature type="binding site" evidence="2">
    <location>
        <position position="246"/>
    </location>
    <ligand>
        <name>S-adenosyl-L-methionine</name>
        <dbReference type="ChEBI" id="CHEBI:59789"/>
    </ligand>
</feature>
<feature type="binding site" evidence="2">
    <location>
        <position position="251"/>
    </location>
    <ligand>
        <name>S-adenosyl-L-methionine</name>
        <dbReference type="ChEBI" id="CHEBI:59789"/>
    </ligand>
</feature>
<feature type="site" description="mRNA cap binding" evidence="3">
    <location>
        <position position="172"/>
    </location>
</feature>
<feature type="site" description="mRNA cap binding" evidence="3">
    <location>
        <position position="178"/>
    </location>
</feature>
<feature type="site" description="mRNA cap binding" evidence="3">
    <location>
        <position position="203"/>
    </location>
</feature>
<feature type="site" description="mRNA cap binding" evidence="3">
    <location>
        <position position="250"/>
    </location>
</feature>
<feature type="site" description="mRNA cap binding" evidence="3">
    <location>
        <position position="344"/>
    </location>
</feature>
<feature type="site" description="mRNA cap binding" evidence="3">
    <location>
        <position position="413"/>
    </location>
</feature>
<sequence length="426" mass="49718">MVLLPEKPVWMSQQQYEEQYGSLLKLKESEKCNHEDKQLALQPKESSIGYSTQERIAKLSVPEVQDDDKNSKVRNRKHQRFDLEEKKKKLRLQKTIEEQIKHHDIEMTANRVVNVDHVVRQHYNERTFLSKKHNRNYSPIIKLRNFNNAIKYILIDKFTRAGDVVLELACGKGGDLRKYGAAGISQFIGIDISNASITEALKRYHSMKNLEYQVILITGDCFGESLGVAVESFPECRFPCDIVSCQFALHYAFETEEKARRMLLNVVKSLKIGGYFFGTIPDSEFIRYKMNKIPESVEKPSWGNSIYKVTFSNNEYQKNGNEFPSPFGQMYTFWLEDAIDNVPEYVIPFESFRSLADEYGMELELQKGFNEFFVEEIPNWVNRFSPKMREGLKRSDGRYGVEGVEKEPAAYFYTTFAFRKVRDYQE</sequence>
<reference key="1">
    <citation type="journal article" date="2004" name="Nature">
        <title>Genome evolution in yeasts.</title>
        <authorList>
            <person name="Dujon B."/>
            <person name="Sherman D."/>
            <person name="Fischer G."/>
            <person name="Durrens P."/>
            <person name="Casaregola S."/>
            <person name="Lafontaine I."/>
            <person name="de Montigny J."/>
            <person name="Marck C."/>
            <person name="Neuveglise C."/>
            <person name="Talla E."/>
            <person name="Goffard N."/>
            <person name="Frangeul L."/>
            <person name="Aigle M."/>
            <person name="Anthouard V."/>
            <person name="Babour A."/>
            <person name="Barbe V."/>
            <person name="Barnay S."/>
            <person name="Blanchin S."/>
            <person name="Beckerich J.-M."/>
            <person name="Beyne E."/>
            <person name="Bleykasten C."/>
            <person name="Boisrame A."/>
            <person name="Boyer J."/>
            <person name="Cattolico L."/>
            <person name="Confanioleri F."/>
            <person name="de Daruvar A."/>
            <person name="Despons L."/>
            <person name="Fabre E."/>
            <person name="Fairhead C."/>
            <person name="Ferry-Dumazet H."/>
            <person name="Groppi A."/>
            <person name="Hantraye F."/>
            <person name="Hennequin C."/>
            <person name="Jauniaux N."/>
            <person name="Joyet P."/>
            <person name="Kachouri R."/>
            <person name="Kerrest A."/>
            <person name="Koszul R."/>
            <person name="Lemaire M."/>
            <person name="Lesur I."/>
            <person name="Ma L."/>
            <person name="Muller H."/>
            <person name="Nicaud J.-M."/>
            <person name="Nikolski M."/>
            <person name="Oztas S."/>
            <person name="Ozier-Kalogeropoulos O."/>
            <person name="Pellenz S."/>
            <person name="Potier S."/>
            <person name="Richard G.-F."/>
            <person name="Straub M.-L."/>
            <person name="Suleau A."/>
            <person name="Swennen D."/>
            <person name="Tekaia F."/>
            <person name="Wesolowski-Louvel M."/>
            <person name="Westhof E."/>
            <person name="Wirth B."/>
            <person name="Zeniou-Meyer M."/>
            <person name="Zivanovic Y."/>
            <person name="Bolotin-Fukuhara M."/>
            <person name="Thierry A."/>
            <person name="Bouchier C."/>
            <person name="Caudron B."/>
            <person name="Scarpelli C."/>
            <person name="Gaillardin C."/>
            <person name="Weissenbach J."/>
            <person name="Wincker P."/>
            <person name="Souciet J.-L."/>
        </authorList>
    </citation>
    <scope>NUCLEOTIDE SEQUENCE [LARGE SCALE GENOMIC DNA]</scope>
    <source>
        <strain>ATCC 8585 / CBS 2359 / DSM 70799 / NBRC 1267 / NRRL Y-1140 / WM37</strain>
    </source>
</reference>
<gene>
    <name type="primary">ABD1</name>
    <name type="ordered locus">KLLA0F10527g</name>
</gene>
<accession>Q6CKI0</accession>